<gene>
    <name evidence="7" type="primary">AFR1</name>
    <name type="ORF">CNAG_00730</name>
</gene>
<name>AFR1_CRYNH</name>
<proteinExistence type="evidence at protein level"/>
<protein>
    <recommendedName>
        <fullName evidence="7">ABC multidrug transporter AFR1</fullName>
    </recommendedName>
</protein>
<keyword id="KW-0067">ATP-binding</keyword>
<keyword id="KW-1003">Cell membrane</keyword>
<keyword id="KW-0325">Glycoprotein</keyword>
<keyword id="KW-0472">Membrane</keyword>
<keyword id="KW-0547">Nucleotide-binding</keyword>
<keyword id="KW-0677">Repeat</keyword>
<keyword id="KW-0812">Transmembrane</keyword>
<keyword id="KW-1133">Transmembrane helix</keyword>
<keyword id="KW-0813">Transport</keyword>
<dbReference type="EMBL" id="CP003820">
    <property type="protein sequence ID" value="AFR92860.1"/>
    <property type="molecule type" value="Genomic_DNA"/>
</dbReference>
<dbReference type="RefSeq" id="XP_012046918.1">
    <property type="nucleotide sequence ID" value="XM_012191528.1"/>
</dbReference>
<dbReference type="SMR" id="J9VME1"/>
<dbReference type="GlyCosmos" id="J9VME1">
    <property type="glycosylation" value="5 sites, No reported glycans"/>
</dbReference>
<dbReference type="GeneID" id="23884510"/>
<dbReference type="KEGG" id="cng:CNAG_00730"/>
<dbReference type="VEuPathDB" id="FungiDB:CNAG_00730"/>
<dbReference type="HOGENOM" id="CLU_000604_35_0_1"/>
<dbReference type="OrthoDB" id="4367at5206"/>
<dbReference type="Proteomes" id="UP000010091">
    <property type="component" value="Chromosome 1"/>
</dbReference>
<dbReference type="GO" id="GO:0005886">
    <property type="term" value="C:plasma membrane"/>
    <property type="evidence" value="ECO:0007669"/>
    <property type="project" value="UniProtKB-SubCell"/>
</dbReference>
<dbReference type="GO" id="GO:0140359">
    <property type="term" value="F:ABC-type transporter activity"/>
    <property type="evidence" value="ECO:0007669"/>
    <property type="project" value="InterPro"/>
</dbReference>
<dbReference type="GO" id="GO:0005524">
    <property type="term" value="F:ATP binding"/>
    <property type="evidence" value="ECO:0007669"/>
    <property type="project" value="UniProtKB-KW"/>
</dbReference>
<dbReference type="GO" id="GO:0016887">
    <property type="term" value="F:ATP hydrolysis activity"/>
    <property type="evidence" value="ECO:0007669"/>
    <property type="project" value="InterPro"/>
</dbReference>
<dbReference type="CDD" id="cd03233">
    <property type="entry name" value="ABCG_PDR_domain1"/>
    <property type="match status" value="1"/>
</dbReference>
<dbReference type="CDD" id="cd03232">
    <property type="entry name" value="ABCG_PDR_domain2"/>
    <property type="match status" value="1"/>
</dbReference>
<dbReference type="FunFam" id="3.40.50.300:FF:000054">
    <property type="entry name" value="ABC multidrug transporter atrF"/>
    <property type="match status" value="1"/>
</dbReference>
<dbReference type="FunFam" id="3.40.50.300:FF:002422">
    <property type="entry name" value="ATP-binding cassette (ABC) transporter, putative Pdr11p"/>
    <property type="match status" value="1"/>
</dbReference>
<dbReference type="Gene3D" id="3.40.50.300">
    <property type="entry name" value="P-loop containing nucleotide triphosphate hydrolases"/>
    <property type="match status" value="2"/>
</dbReference>
<dbReference type="InterPro" id="IPR003593">
    <property type="entry name" value="AAA+_ATPase"/>
</dbReference>
<dbReference type="InterPro" id="IPR013525">
    <property type="entry name" value="ABC2_TM"/>
</dbReference>
<dbReference type="InterPro" id="IPR003439">
    <property type="entry name" value="ABC_transporter-like_ATP-bd"/>
</dbReference>
<dbReference type="InterPro" id="IPR017871">
    <property type="entry name" value="ABC_transporter-like_CS"/>
</dbReference>
<dbReference type="InterPro" id="IPR043926">
    <property type="entry name" value="ABCG_dom"/>
</dbReference>
<dbReference type="InterPro" id="IPR034001">
    <property type="entry name" value="ABCG_PDR_1"/>
</dbReference>
<dbReference type="InterPro" id="IPR034003">
    <property type="entry name" value="ABCG_PDR_2"/>
</dbReference>
<dbReference type="InterPro" id="IPR027417">
    <property type="entry name" value="P-loop_NTPase"/>
</dbReference>
<dbReference type="InterPro" id="IPR010929">
    <property type="entry name" value="PDR_CDR_ABC"/>
</dbReference>
<dbReference type="PANTHER" id="PTHR19241">
    <property type="entry name" value="ATP-BINDING CASSETTE TRANSPORTER"/>
    <property type="match status" value="1"/>
</dbReference>
<dbReference type="Pfam" id="PF01061">
    <property type="entry name" value="ABC2_membrane"/>
    <property type="match status" value="2"/>
</dbReference>
<dbReference type="Pfam" id="PF19055">
    <property type="entry name" value="ABC2_membrane_7"/>
    <property type="match status" value="1"/>
</dbReference>
<dbReference type="Pfam" id="PF00005">
    <property type="entry name" value="ABC_tran"/>
    <property type="match status" value="2"/>
</dbReference>
<dbReference type="Pfam" id="PF06422">
    <property type="entry name" value="PDR_CDR"/>
    <property type="match status" value="1"/>
</dbReference>
<dbReference type="SMART" id="SM00382">
    <property type="entry name" value="AAA"/>
    <property type="match status" value="1"/>
</dbReference>
<dbReference type="SUPFAM" id="SSF52540">
    <property type="entry name" value="P-loop containing nucleoside triphosphate hydrolases"/>
    <property type="match status" value="2"/>
</dbReference>
<dbReference type="PROSITE" id="PS00211">
    <property type="entry name" value="ABC_TRANSPORTER_1"/>
    <property type="match status" value="1"/>
</dbReference>
<dbReference type="PROSITE" id="PS50893">
    <property type="entry name" value="ABC_TRANSPORTER_2"/>
    <property type="match status" value="2"/>
</dbReference>
<comment type="function">
    <text evidence="5 6">Major pleiotropic ABC efflux transporter that confers resistance to structurally and functionally unrelated compounds including azoles such as fluconazole (FLC), itraconazole (ITC), posaconazole (POS), and voriconazole (VRC) (PubMed:25630649, PubMed:29378705). Is also able to efflux the eukaryote protein synthesis inhibitor cycloheximide (CHX) (PubMed:29378705).</text>
</comment>
<comment type="catalytic activity">
    <reaction evidence="5">
        <text>itraconazole(in) + ATP + H2O = itraconazole(out) + ADP + phosphate + H(+)</text>
        <dbReference type="Rhea" id="RHEA:33503"/>
        <dbReference type="ChEBI" id="CHEBI:6076"/>
        <dbReference type="ChEBI" id="CHEBI:15377"/>
        <dbReference type="ChEBI" id="CHEBI:15378"/>
        <dbReference type="ChEBI" id="CHEBI:30616"/>
        <dbReference type="ChEBI" id="CHEBI:43474"/>
        <dbReference type="ChEBI" id="CHEBI:456216"/>
    </reaction>
    <physiologicalReaction direction="left-to-right" evidence="5">
        <dbReference type="Rhea" id="RHEA:33504"/>
    </physiologicalReaction>
</comment>
<comment type="catalytic activity">
    <reaction evidence="5">
        <text>voriconazole(in) + ATP + H2O = voriconazole(out) + ADP + phosphate + H(+)</text>
        <dbReference type="Rhea" id="RHEA:61912"/>
        <dbReference type="ChEBI" id="CHEBI:10023"/>
        <dbReference type="ChEBI" id="CHEBI:15377"/>
        <dbReference type="ChEBI" id="CHEBI:15378"/>
        <dbReference type="ChEBI" id="CHEBI:30616"/>
        <dbReference type="ChEBI" id="CHEBI:43474"/>
        <dbReference type="ChEBI" id="CHEBI:456216"/>
    </reaction>
    <physiologicalReaction direction="left-to-right" evidence="5">
        <dbReference type="Rhea" id="RHEA:61913"/>
    </physiologicalReaction>
</comment>
<comment type="catalytic activity">
    <reaction evidence="5">
        <text>fluconazole(in) + ATP + H2O = fluconazole(out) + ADP + phosphate + H(+)</text>
        <dbReference type="Rhea" id="RHEA:61916"/>
        <dbReference type="ChEBI" id="CHEBI:15377"/>
        <dbReference type="ChEBI" id="CHEBI:15378"/>
        <dbReference type="ChEBI" id="CHEBI:30616"/>
        <dbReference type="ChEBI" id="CHEBI:43474"/>
        <dbReference type="ChEBI" id="CHEBI:46081"/>
        <dbReference type="ChEBI" id="CHEBI:456216"/>
    </reaction>
    <physiologicalReaction direction="left-to-right" evidence="5">
        <dbReference type="Rhea" id="RHEA:61917"/>
    </physiologicalReaction>
</comment>
<comment type="biophysicochemical properties">
    <kinetics>
        <KM evidence="5">0.26 uM for fluconazole transport</KM>
        <Vmax evidence="5">3.22 pmol/min/mg enzyme for fluconazole transport</Vmax>
    </kinetics>
</comment>
<comment type="subcellular location">
    <subcellularLocation>
        <location evidence="5">Cell membrane</location>
        <topology evidence="1">Multi-pass membrane protein</topology>
    </subcellularLocation>
</comment>
<comment type="induction">
    <text evidence="6">Expression is induced in the presence of fluconazole (FLC).</text>
</comment>
<comment type="disruption phenotype">
    <text evidence="6">Results in drastically higher susceptibility to fluconazole (FLC), itraconazole (ITC), voriconazole (VRC), as well as to the eukaryote protein synthesis inhibitor cycloheximide (CHX).</text>
</comment>
<comment type="similarity">
    <text evidence="8">Belongs to the ABC transporter superfamily. ABCG family. PDR (TC 3.A.1.205) subfamily.</text>
</comment>
<sequence length="1543" mass="172527">MSAAGVPAELNNLGAPITATTQNPSGLANSQVTSGPVSSATQHDEHRSSAGNTLADEEDDKAVEAEKAEAIDAAGDGKQKRLPADSSEDIVAELEPHHVSVHRGKEEFAALERKYSNLSQRSQHELHRPTTRHSVRSSFSRKDRVVSRLTQDDAEKAKEGEGEFNLVEVLRSGRENQDEAGIKRKAVGVVWEDHEVIGAGGMRINIRNFSSAIIEQFMMPAIKVLGIFGFNPFAPKPKAILHPSSGLLKPGEMCLVLGRPEAGCTTFLKTITNQRAGYMEINGNVEYAGVGWKEMRKRYAGEVVYNQEDDDHLPTLTVAQTIRFALATKTPKKKIPGVSAKQFQDDMLDLLLSMLNIKHTANTIVGNAFVRGVSGGERKRVSIAEMFCSGATVCSWDNSTRGLDASTALDYAKSLRLLTDIMGQTTFVSLYQAGEGIYDQFDKVLVLNEGHVAYFGPAKEARQYMIGLGYRDLPRQTTADYLSGCTDVNERRFADGRDATNVPATPEEMGQAYRESEICARMTREREEYKHLMAEDATARENFKQAVLEQKHKGVGKKSPYTVSFLQQVFIIFKRQLRLKFQDHFGISTGFATSIIIALIVGSVYFRLPETASGAFTRGGLLFLGLLFNALTSFSELPSQMLGRSVLYRQNEYRFYRPAAFALAAVLADVPYNASVIFLFSIVLYFMGGLYSSGGAFFMFFLFVFLTFMVMSAFFRTLGVATSDYNVAARLASVLISFMVTYTGYMIPVQRMKRWLFWIFYLNPLSYGYEAIFANEFSRISLTCDSSYTIPRNIPEAGITGYPDTLGPNQMCSIFGSTPGDPNVSGSDYMAVGYSYYKAHIWRNFGILLGFFTFFMFLQMLFIEVLEQGAKHFSINVYKKEDKDLKAKNERLAERREAFRAGELEQDLSELKMRPEPFTWEGLSYTVPVPGGHRQLLNDIYGYVKPGSLTALMGASGAGKTTLLDVLASRKNIGVVEGDILMNGRPIGTDFQRGCAYAEQQDTHEWTTTVREALQYSAYLRQPQHVPKQEKDDYVEDIIELLELQELADAMIGFPNYGLSVEARKRVTIGVELAAKPELLLFLDEPTSGLDGQSAYNIVRFLKKLCAAGQKILCTIHQPNALLFQSFDRLLLLQRGGECVYFGDIGPDSKVLIDYLERNGAEVPHDANPAEFMLEAIGAGSRKRIGSDWGEKWRNSPEFAEVKREIQELKAEALAKPIEEKSNRTEYATSFLFQLKTVLHRTNVALWRNADYQWTRLFAHLAIGLIVTLTFLQLDNSVQSLQYRVFAIFFATVLPALILAQIEPQYIMSRMTFNREASSKMYSSTVFALTQLLSEMPYSLGCAVSFFLLLYYGVGFPYASSRAGYFFLMILVTEVYAVTLGQAVAALSPTILIAALFNPFLLVLFSIFCGVTAPPPTLPYFWRKWMWPLDPFTRLISGLVSTVLQDQEVVCKDGEYQVFPAPSGQTCQQWAGAFAEAVGGYINNPDSTGDCQFCQYRSGQAFFVPLEISFSTRWRDFGIFICYVVFNILVLLIAARFLKWQRR</sequence>
<accession>J9VME1</accession>
<organism>
    <name type="scientific">Cryptococcus neoformans var. grubii serotype A (strain H99 / ATCC 208821 / CBS 10515 / FGSC 9487)</name>
    <name type="common">Filobasidiella neoformans var. grubii</name>
    <dbReference type="NCBI Taxonomy" id="235443"/>
    <lineage>
        <taxon>Eukaryota</taxon>
        <taxon>Fungi</taxon>
        <taxon>Dikarya</taxon>
        <taxon>Basidiomycota</taxon>
        <taxon>Agaricomycotina</taxon>
        <taxon>Tremellomycetes</taxon>
        <taxon>Tremellales</taxon>
        <taxon>Cryptococcaceae</taxon>
        <taxon>Cryptococcus</taxon>
        <taxon>Cryptococcus neoformans species complex</taxon>
    </lineage>
</organism>
<feature type="chain" id="PRO_0000452663" description="ABC multidrug transporter AFR1">
    <location>
        <begin position="1"/>
        <end position="1543"/>
    </location>
</feature>
<feature type="transmembrane region" description="Helical" evidence="1">
    <location>
        <begin position="585"/>
        <end position="605"/>
    </location>
</feature>
<feature type="transmembrane region" description="Helical" evidence="1">
    <location>
        <begin position="619"/>
        <end position="639"/>
    </location>
</feature>
<feature type="transmembrane region" description="Helical" evidence="1">
    <location>
        <begin position="670"/>
        <end position="690"/>
    </location>
</feature>
<feature type="transmembrane region" description="Helical" evidence="1">
    <location>
        <begin position="695"/>
        <end position="715"/>
    </location>
</feature>
<feature type="transmembrane region" description="Helical" evidence="1">
    <location>
        <begin position="727"/>
        <end position="747"/>
    </location>
</feature>
<feature type="transmembrane region" description="Helical" evidence="1">
    <location>
        <begin position="845"/>
        <end position="865"/>
    </location>
</feature>
<feature type="transmembrane region" description="Helical" evidence="1">
    <location>
        <begin position="1254"/>
        <end position="1274"/>
    </location>
</feature>
<feature type="transmembrane region" description="Helical" evidence="1">
    <location>
        <begin position="1285"/>
        <end position="1305"/>
    </location>
</feature>
<feature type="transmembrane region" description="Helical" evidence="1">
    <location>
        <begin position="1336"/>
        <end position="1356"/>
    </location>
</feature>
<feature type="transmembrane region" description="Helical" evidence="1">
    <location>
        <begin position="1366"/>
        <end position="1386"/>
    </location>
</feature>
<feature type="transmembrane region" description="Helical" evidence="1">
    <location>
        <begin position="1391"/>
        <end position="1411"/>
    </location>
</feature>
<feature type="transmembrane region" description="Helical" evidence="1">
    <location>
        <begin position="1517"/>
        <end position="1537"/>
    </location>
</feature>
<feature type="domain" description="ABC transporter 1" evidence="2">
    <location>
        <begin position="222"/>
        <end position="474"/>
    </location>
</feature>
<feature type="domain" description="ABC transporter 2" evidence="2">
    <location>
        <begin position="918"/>
        <end position="1160"/>
    </location>
</feature>
<feature type="region of interest" description="Disordered" evidence="4">
    <location>
        <begin position="1"/>
        <end position="85"/>
    </location>
</feature>
<feature type="region of interest" description="Disordered" evidence="4">
    <location>
        <begin position="119"/>
        <end position="157"/>
    </location>
</feature>
<feature type="compositionally biased region" description="Polar residues" evidence="4">
    <location>
        <begin position="18"/>
        <end position="41"/>
    </location>
</feature>
<feature type="compositionally biased region" description="Basic and acidic residues" evidence="4">
    <location>
        <begin position="62"/>
        <end position="83"/>
    </location>
</feature>
<feature type="compositionally biased region" description="Basic and acidic residues" evidence="4">
    <location>
        <begin position="140"/>
        <end position="157"/>
    </location>
</feature>
<feature type="binding site" evidence="2">
    <location>
        <begin position="954"/>
        <end position="961"/>
    </location>
    <ligand>
        <name>ATP</name>
        <dbReference type="ChEBI" id="CHEBI:30616"/>
    </ligand>
</feature>
<feature type="glycosylation site" description="N-linked (GlcNAc...) asparagine" evidence="3">
    <location>
        <position position="117"/>
    </location>
</feature>
<feature type="glycosylation site" description="N-linked (GlcNAc...) asparagine" evidence="3">
    <location>
        <position position="208"/>
    </location>
</feature>
<feature type="glycosylation site" description="N-linked (GlcNAc...) asparagine" evidence="3">
    <location>
        <position position="398"/>
    </location>
</feature>
<feature type="glycosylation site" description="N-linked (GlcNAc...) asparagine" evidence="3">
    <location>
        <position position="823"/>
    </location>
</feature>
<feature type="glycosylation site" description="N-linked (GlcNAc...) asparagine" evidence="3">
    <location>
        <position position="1223"/>
    </location>
</feature>
<reference key="1">
    <citation type="journal article" date="2014" name="PLoS Genet.">
        <title>Analysis of the genome and transcriptome of Cryptococcus neoformans var. grubii reveals complex RNA expression and microevolution leading to virulence attenuation.</title>
        <authorList>
            <person name="Janbon G."/>
            <person name="Ormerod K.L."/>
            <person name="Paulet D."/>
            <person name="Byrnes E.J. III"/>
            <person name="Yadav V."/>
            <person name="Chatterjee G."/>
            <person name="Mullapudi N."/>
            <person name="Hon C.-C."/>
            <person name="Billmyre R.B."/>
            <person name="Brunel F."/>
            <person name="Bahn Y.-S."/>
            <person name="Chen W."/>
            <person name="Chen Y."/>
            <person name="Chow E.W.L."/>
            <person name="Coppee J.-Y."/>
            <person name="Floyd-Averette A."/>
            <person name="Gaillardin C."/>
            <person name="Gerik K.J."/>
            <person name="Goldberg J."/>
            <person name="Gonzalez-Hilarion S."/>
            <person name="Gujja S."/>
            <person name="Hamlin J.L."/>
            <person name="Hsueh Y.-P."/>
            <person name="Ianiri G."/>
            <person name="Jones S."/>
            <person name="Kodira C.D."/>
            <person name="Kozubowski L."/>
            <person name="Lam W."/>
            <person name="Marra M."/>
            <person name="Mesner L.D."/>
            <person name="Mieczkowski P.A."/>
            <person name="Moyrand F."/>
            <person name="Nielsen K."/>
            <person name="Proux C."/>
            <person name="Rossignol T."/>
            <person name="Schein J.E."/>
            <person name="Sun S."/>
            <person name="Wollschlaeger C."/>
            <person name="Wood I.A."/>
            <person name="Zeng Q."/>
            <person name="Neuveglise C."/>
            <person name="Newlon C.S."/>
            <person name="Perfect J.R."/>
            <person name="Lodge J.K."/>
            <person name="Idnurm A."/>
            <person name="Stajich J.E."/>
            <person name="Kronstad J.W."/>
            <person name="Sanyal K."/>
            <person name="Heitman J."/>
            <person name="Fraser J.A."/>
            <person name="Cuomo C.A."/>
            <person name="Dietrich F.S."/>
        </authorList>
    </citation>
    <scope>NUCLEOTIDE SEQUENCE [LARGE SCALE GENOMIC DNA]</scope>
    <source>
        <strain>H99 / ATCC 208821 / CBS 10515 / FGSC 9487</strain>
    </source>
</reference>
<reference key="2">
    <citation type="journal article" date="2015" name="J. Antimicrob. Chemother.">
        <title>Identification and properties of plasma membrane azole efflux pumps from the pathogenic fungi Cryptococcus gattii and Cryptococcus neoformans.</title>
        <authorList>
            <person name="Basso L.R. Jr."/>
            <person name="Gast C.E."/>
            <person name="Bruzual I."/>
            <person name="Wong B."/>
        </authorList>
    </citation>
    <scope>FUNCTION</scope>
    <scope>CATALYTIC ACTIVITY</scope>
    <scope>SUBSTRATE SPECIFICITY</scope>
    <scope>BIOPHYSICOCHEMICAL PROPERTIES</scope>
    <scope>SUBCELLULAR LOCATION</scope>
</reference>
<reference key="3">
    <citation type="journal article" date="2018" name="Antimicrob. Agents Chemother.">
        <title>Roles of three Cryptococcus neoformans and Cryptococcus gattii efflux pump-coding genes in response to drug treatment.</title>
        <authorList>
            <person name="Chang M."/>
            <person name="Sionov E."/>
            <person name="Khanal Lamichhane A."/>
            <person name="Kwon-Chung K.J."/>
            <person name="Chang Y.C."/>
        </authorList>
    </citation>
    <scope>FUNCTION</scope>
    <scope>DISRUPTION PHENOTYPE</scope>
    <scope>INDUCTION</scope>
</reference>
<evidence type="ECO:0000255" key="1"/>
<evidence type="ECO:0000255" key="2">
    <source>
        <dbReference type="PROSITE-ProRule" id="PRU00434"/>
    </source>
</evidence>
<evidence type="ECO:0000255" key="3">
    <source>
        <dbReference type="PROSITE-ProRule" id="PRU00498"/>
    </source>
</evidence>
<evidence type="ECO:0000256" key="4">
    <source>
        <dbReference type="SAM" id="MobiDB-lite"/>
    </source>
</evidence>
<evidence type="ECO:0000269" key="5">
    <source>
    </source>
</evidence>
<evidence type="ECO:0000269" key="6">
    <source>
    </source>
</evidence>
<evidence type="ECO:0000303" key="7">
    <source>
    </source>
</evidence>
<evidence type="ECO:0000305" key="8"/>